<protein>
    <recommendedName>
        <fullName>Cytochrome P450 72A397</fullName>
        <ecNumber evidence="3">1.14.14.-</ecNumber>
    </recommendedName>
</protein>
<accession>A0A0S2IHL2</accession>
<keyword id="KW-0349">Heme</keyword>
<keyword id="KW-0408">Iron</keyword>
<keyword id="KW-0472">Membrane</keyword>
<keyword id="KW-0479">Metal-binding</keyword>
<keyword id="KW-0503">Monooxygenase</keyword>
<keyword id="KW-0560">Oxidoreductase</keyword>
<keyword id="KW-0812">Transmembrane</keyword>
<keyword id="KW-1133">Transmembrane helix</keyword>
<comment type="function">
    <text evidence="3">Catalyzes the oxidation of oleanolate at the C-23 position to form hederagenin.</text>
</comment>
<comment type="catalytic activity">
    <reaction evidence="3">
        <text>oleanolate + reduced [NADPH--hemoprotein reductase] + O2 = hederagenin + oxidized [NADPH--hemoprotein reductase] + H2O + H(+)</text>
        <dbReference type="Rhea" id="RHEA:56488"/>
        <dbReference type="Rhea" id="RHEA-COMP:11964"/>
        <dbReference type="Rhea" id="RHEA-COMP:11965"/>
        <dbReference type="ChEBI" id="CHEBI:15377"/>
        <dbReference type="ChEBI" id="CHEBI:15378"/>
        <dbReference type="ChEBI" id="CHEBI:15379"/>
        <dbReference type="ChEBI" id="CHEBI:57618"/>
        <dbReference type="ChEBI" id="CHEBI:58210"/>
        <dbReference type="ChEBI" id="CHEBI:82828"/>
        <dbReference type="ChEBI" id="CHEBI:140466"/>
    </reaction>
    <physiologicalReaction direction="left-to-right" evidence="3">
        <dbReference type="Rhea" id="RHEA:56489"/>
    </physiologicalReaction>
</comment>
<comment type="cofactor">
    <cofactor evidence="1">
        <name>heme</name>
        <dbReference type="ChEBI" id="CHEBI:30413"/>
    </cofactor>
</comment>
<comment type="subcellular location">
    <subcellularLocation>
        <location evidence="2">Membrane</location>
        <topology evidence="2">Single-pass membrane protein</topology>
    </subcellularLocation>
</comment>
<comment type="similarity">
    <text evidence="5">Belongs to the cytochrome P450 family.</text>
</comment>
<organism>
    <name type="scientific">Kalopanax septemlobus</name>
    <name type="common">Castor aralia</name>
    <name type="synonym">Acanthopanax septemlobus</name>
    <dbReference type="NCBI Taxonomy" id="228393"/>
    <lineage>
        <taxon>Eukaryota</taxon>
        <taxon>Viridiplantae</taxon>
        <taxon>Streptophyta</taxon>
        <taxon>Embryophyta</taxon>
        <taxon>Tracheophyta</taxon>
        <taxon>Spermatophyta</taxon>
        <taxon>Magnoliopsida</taxon>
        <taxon>eudicotyledons</taxon>
        <taxon>Gunneridae</taxon>
        <taxon>Pentapetalae</taxon>
        <taxon>asterids</taxon>
        <taxon>campanulids</taxon>
        <taxon>Apiales</taxon>
        <taxon>Araliaceae</taxon>
        <taxon>Kalopanax</taxon>
    </lineage>
</organism>
<feature type="chain" id="PRO_0000452136" description="Cytochrome P450 72A397">
    <location>
        <begin position="1"/>
        <end position="520"/>
    </location>
</feature>
<feature type="transmembrane region" description="Helical" evidence="2">
    <location>
        <begin position="14"/>
        <end position="34"/>
    </location>
</feature>
<feature type="binding site" description="axial binding residue" evidence="1">
    <location>
        <position position="468"/>
    </location>
    <ligand>
        <name>heme</name>
        <dbReference type="ChEBI" id="CHEBI:30413"/>
    </ligand>
    <ligandPart>
        <name>Fe</name>
        <dbReference type="ChEBI" id="CHEBI:18248"/>
    </ligandPart>
</feature>
<evidence type="ECO:0000250" key="1">
    <source>
        <dbReference type="UniProtKB" id="Q94IP1"/>
    </source>
</evidence>
<evidence type="ECO:0000255" key="2"/>
<evidence type="ECO:0000269" key="3">
    <source>
    </source>
</evidence>
<evidence type="ECO:0000303" key="4">
    <source>
    </source>
</evidence>
<evidence type="ECO:0000305" key="5"/>
<name>C7A39_KALSE</name>
<gene>
    <name evidence="4" type="primary">CYP72A397</name>
</gene>
<dbReference type="EC" id="1.14.14.-" evidence="3"/>
<dbReference type="EMBL" id="KT150517">
    <property type="protein sequence ID" value="ALO23113.1"/>
    <property type="molecule type" value="mRNA"/>
</dbReference>
<dbReference type="SMR" id="A0A0S2IHL2"/>
<dbReference type="GO" id="GO:0016020">
    <property type="term" value="C:membrane"/>
    <property type="evidence" value="ECO:0007669"/>
    <property type="project" value="UniProtKB-SubCell"/>
</dbReference>
<dbReference type="GO" id="GO:0020037">
    <property type="term" value="F:heme binding"/>
    <property type="evidence" value="ECO:0007669"/>
    <property type="project" value="InterPro"/>
</dbReference>
<dbReference type="GO" id="GO:0005506">
    <property type="term" value="F:iron ion binding"/>
    <property type="evidence" value="ECO:0007669"/>
    <property type="project" value="InterPro"/>
</dbReference>
<dbReference type="GO" id="GO:0016712">
    <property type="term" value="F:oxidoreductase activity, acting on paired donors, with incorporation or reduction of molecular oxygen, reduced flavin or flavoprotein as one donor, and incorporation of one atom of oxygen"/>
    <property type="evidence" value="ECO:0000314"/>
    <property type="project" value="UniProtKB"/>
</dbReference>
<dbReference type="GO" id="GO:0016134">
    <property type="term" value="P:saponin metabolic process"/>
    <property type="evidence" value="ECO:0000314"/>
    <property type="project" value="UniProtKB"/>
</dbReference>
<dbReference type="CDD" id="cd20642">
    <property type="entry name" value="CYP72"/>
    <property type="match status" value="1"/>
</dbReference>
<dbReference type="FunFam" id="1.10.630.10:FF:000029">
    <property type="entry name" value="Cytochrome P450 734A1"/>
    <property type="match status" value="1"/>
</dbReference>
<dbReference type="Gene3D" id="1.10.630.10">
    <property type="entry name" value="Cytochrome P450"/>
    <property type="match status" value="1"/>
</dbReference>
<dbReference type="InterPro" id="IPR001128">
    <property type="entry name" value="Cyt_P450"/>
</dbReference>
<dbReference type="InterPro" id="IPR017972">
    <property type="entry name" value="Cyt_P450_CS"/>
</dbReference>
<dbReference type="InterPro" id="IPR002401">
    <property type="entry name" value="Cyt_P450_E_grp-I"/>
</dbReference>
<dbReference type="InterPro" id="IPR036396">
    <property type="entry name" value="Cyt_P450_sf"/>
</dbReference>
<dbReference type="InterPro" id="IPR050665">
    <property type="entry name" value="Cytochrome_P450_Monooxygen"/>
</dbReference>
<dbReference type="PANTHER" id="PTHR24282:SF255">
    <property type="entry name" value="CYTOCHROME P450 72A11-RELATED"/>
    <property type="match status" value="1"/>
</dbReference>
<dbReference type="PANTHER" id="PTHR24282">
    <property type="entry name" value="CYTOCHROME P450 FAMILY MEMBER"/>
    <property type="match status" value="1"/>
</dbReference>
<dbReference type="Pfam" id="PF00067">
    <property type="entry name" value="p450"/>
    <property type="match status" value="1"/>
</dbReference>
<dbReference type="PRINTS" id="PR00463">
    <property type="entry name" value="EP450I"/>
</dbReference>
<dbReference type="PRINTS" id="PR00385">
    <property type="entry name" value="P450"/>
</dbReference>
<dbReference type="SUPFAM" id="SSF48264">
    <property type="entry name" value="Cytochrome P450"/>
    <property type="match status" value="1"/>
</dbReference>
<dbReference type="PROSITE" id="PS00086">
    <property type="entry name" value="CYTOCHROME_P450"/>
    <property type="match status" value="1"/>
</dbReference>
<reference key="1">
    <citation type="journal article" date="2018" name="Plant Cell Physiol.">
        <title>Transcriptomic analysis of Kalopanax septemlobus and characterization of KsBAS, CYP716A94 and CYP72A397 genes involved in hederagenin saponin biosynthesis.</title>
        <authorList>
            <person name="Han J.Y."/>
            <person name="Chun J.H."/>
            <person name="Oh S.A."/>
            <person name="Park S.B."/>
            <person name="Hwang H.S."/>
            <person name="Lee H."/>
            <person name="Choi Y.E."/>
        </authorList>
    </citation>
    <scope>NUCLEOTIDE SEQUENCE [MRNA]</scope>
    <scope>FUNCTION</scope>
    <scope>CATALYTIC ACTIVITY</scope>
</reference>
<proteinExistence type="evidence at protein level"/>
<sequence>MDGVVVTYTKIAAAVAVAVVVVGWAWKVLNWVWVSPRKLEESLRKQGFRGNSYRLFYGDLKESSEMTRKAKLKPINLSDDPVLRVRPFIHQTVKKYGKSSFIWIGPTPRVQIMDPEIIKEIMVKSYKFNKPKRNPLVKLFADGLANHEGELWAKHRKLLNPAFHLERLKCMLPAMYFSCIEMVSKWDKMISKDGSRELDVWPFLQRLTSDVISHTAFGSSYEEGNIVFELQTEQAELVMKTLQSVYIPGWSYLPTKRNRKMKEIDRKTQSCLMNIINKKTKAMQAGEGSTDDILGILLESNLKEQLGQGKKNVGMSIQEVMGECKQFYFAGQETTSGLLVWTMVLLSIHPNWQARAREEVLQQFGNAKPDFDNLNHLKIVTMILYEVLRLYPPVDTLFRRVDQETTLGDITLPAGVQISLPIMILHHDQNIWGDDAKEFNPERFSEGVSKATKNQVVFFPFGWGPRICIGQNFALLEAKLALAIILQRFSFELSPSYTHAPTTVLTVQPQHGANLILHKL</sequence>